<keyword id="KW-0030">Aminoacyl-tRNA synthetase</keyword>
<keyword id="KW-0067">ATP-binding</keyword>
<keyword id="KW-0963">Cytoplasm</keyword>
<keyword id="KW-0436">Ligase</keyword>
<keyword id="KW-0547">Nucleotide-binding</keyword>
<keyword id="KW-0648">Protein biosynthesis</keyword>
<organism>
    <name type="scientific">Escherichia coli O17:K52:H18 (strain UMN026 / ExPEC)</name>
    <dbReference type="NCBI Taxonomy" id="585056"/>
    <lineage>
        <taxon>Bacteria</taxon>
        <taxon>Pseudomonadati</taxon>
        <taxon>Pseudomonadota</taxon>
        <taxon>Gammaproteobacteria</taxon>
        <taxon>Enterobacterales</taxon>
        <taxon>Enterobacteriaceae</taxon>
        <taxon>Escherichia</taxon>
    </lineage>
</organism>
<reference key="1">
    <citation type="journal article" date="2009" name="PLoS Genet.">
        <title>Organised genome dynamics in the Escherichia coli species results in highly diverse adaptive paths.</title>
        <authorList>
            <person name="Touchon M."/>
            <person name="Hoede C."/>
            <person name="Tenaillon O."/>
            <person name="Barbe V."/>
            <person name="Baeriswyl S."/>
            <person name="Bidet P."/>
            <person name="Bingen E."/>
            <person name="Bonacorsi S."/>
            <person name="Bouchier C."/>
            <person name="Bouvet O."/>
            <person name="Calteau A."/>
            <person name="Chiapello H."/>
            <person name="Clermont O."/>
            <person name="Cruveiller S."/>
            <person name="Danchin A."/>
            <person name="Diard M."/>
            <person name="Dossat C."/>
            <person name="Karoui M.E."/>
            <person name="Frapy E."/>
            <person name="Garry L."/>
            <person name="Ghigo J.M."/>
            <person name="Gilles A.M."/>
            <person name="Johnson J."/>
            <person name="Le Bouguenec C."/>
            <person name="Lescat M."/>
            <person name="Mangenot S."/>
            <person name="Martinez-Jehanne V."/>
            <person name="Matic I."/>
            <person name="Nassif X."/>
            <person name="Oztas S."/>
            <person name="Petit M.A."/>
            <person name="Pichon C."/>
            <person name="Rouy Z."/>
            <person name="Ruf C.S."/>
            <person name="Schneider D."/>
            <person name="Tourret J."/>
            <person name="Vacherie B."/>
            <person name="Vallenet D."/>
            <person name="Medigue C."/>
            <person name="Rocha E.P.C."/>
            <person name="Denamur E."/>
        </authorList>
    </citation>
    <scope>NUCLEOTIDE SEQUENCE [LARGE SCALE GENOMIC DNA]</scope>
    <source>
        <strain>UMN026 / ExPEC</strain>
    </source>
</reference>
<name>SYH_ECOLU</name>
<dbReference type="EC" id="6.1.1.21" evidence="1"/>
<dbReference type="EMBL" id="CU928163">
    <property type="protein sequence ID" value="CAR14011.1"/>
    <property type="molecule type" value="Genomic_DNA"/>
</dbReference>
<dbReference type="RefSeq" id="WP_001107178.1">
    <property type="nucleotide sequence ID" value="NC_011751.1"/>
</dbReference>
<dbReference type="RefSeq" id="YP_002413536.1">
    <property type="nucleotide sequence ID" value="NC_011751.1"/>
</dbReference>
<dbReference type="SMR" id="B7N6A2"/>
<dbReference type="STRING" id="585056.ECUMN_2834"/>
<dbReference type="KEGG" id="eum:ECUMN_2834"/>
<dbReference type="PATRIC" id="fig|585056.7.peg.3019"/>
<dbReference type="HOGENOM" id="CLU_025113_1_1_6"/>
<dbReference type="Proteomes" id="UP000007097">
    <property type="component" value="Chromosome"/>
</dbReference>
<dbReference type="GO" id="GO:0005737">
    <property type="term" value="C:cytoplasm"/>
    <property type="evidence" value="ECO:0007669"/>
    <property type="project" value="UniProtKB-SubCell"/>
</dbReference>
<dbReference type="GO" id="GO:0005524">
    <property type="term" value="F:ATP binding"/>
    <property type="evidence" value="ECO:0007669"/>
    <property type="project" value="UniProtKB-UniRule"/>
</dbReference>
<dbReference type="GO" id="GO:0004821">
    <property type="term" value="F:histidine-tRNA ligase activity"/>
    <property type="evidence" value="ECO:0007669"/>
    <property type="project" value="UniProtKB-UniRule"/>
</dbReference>
<dbReference type="GO" id="GO:0006427">
    <property type="term" value="P:histidyl-tRNA aminoacylation"/>
    <property type="evidence" value="ECO:0007669"/>
    <property type="project" value="UniProtKB-UniRule"/>
</dbReference>
<dbReference type="CDD" id="cd00773">
    <property type="entry name" value="HisRS-like_core"/>
    <property type="match status" value="1"/>
</dbReference>
<dbReference type="CDD" id="cd00859">
    <property type="entry name" value="HisRS_anticodon"/>
    <property type="match status" value="1"/>
</dbReference>
<dbReference type="FunFam" id="3.30.930.10:FF:000005">
    <property type="entry name" value="Histidine--tRNA ligase"/>
    <property type="match status" value="1"/>
</dbReference>
<dbReference type="FunFam" id="3.40.50.800:FF:000007">
    <property type="entry name" value="Histidine--tRNA ligase"/>
    <property type="match status" value="1"/>
</dbReference>
<dbReference type="Gene3D" id="3.40.50.800">
    <property type="entry name" value="Anticodon-binding domain"/>
    <property type="match status" value="1"/>
</dbReference>
<dbReference type="Gene3D" id="3.30.930.10">
    <property type="entry name" value="Bira Bifunctional Protein, Domain 2"/>
    <property type="match status" value="1"/>
</dbReference>
<dbReference type="HAMAP" id="MF_00127">
    <property type="entry name" value="His_tRNA_synth"/>
    <property type="match status" value="1"/>
</dbReference>
<dbReference type="InterPro" id="IPR006195">
    <property type="entry name" value="aa-tRNA-synth_II"/>
</dbReference>
<dbReference type="InterPro" id="IPR045864">
    <property type="entry name" value="aa-tRNA-synth_II/BPL/LPL"/>
</dbReference>
<dbReference type="InterPro" id="IPR004154">
    <property type="entry name" value="Anticodon-bd"/>
</dbReference>
<dbReference type="InterPro" id="IPR036621">
    <property type="entry name" value="Anticodon-bd_dom_sf"/>
</dbReference>
<dbReference type="InterPro" id="IPR015807">
    <property type="entry name" value="His-tRNA-ligase"/>
</dbReference>
<dbReference type="InterPro" id="IPR041715">
    <property type="entry name" value="HisRS-like_core"/>
</dbReference>
<dbReference type="InterPro" id="IPR004516">
    <property type="entry name" value="HisRS/HisZ"/>
</dbReference>
<dbReference type="InterPro" id="IPR033656">
    <property type="entry name" value="HisRS_anticodon"/>
</dbReference>
<dbReference type="NCBIfam" id="TIGR00442">
    <property type="entry name" value="hisS"/>
    <property type="match status" value="1"/>
</dbReference>
<dbReference type="PANTHER" id="PTHR43707:SF1">
    <property type="entry name" value="HISTIDINE--TRNA LIGASE, MITOCHONDRIAL-RELATED"/>
    <property type="match status" value="1"/>
</dbReference>
<dbReference type="PANTHER" id="PTHR43707">
    <property type="entry name" value="HISTIDYL-TRNA SYNTHETASE"/>
    <property type="match status" value="1"/>
</dbReference>
<dbReference type="Pfam" id="PF03129">
    <property type="entry name" value="HGTP_anticodon"/>
    <property type="match status" value="1"/>
</dbReference>
<dbReference type="Pfam" id="PF13393">
    <property type="entry name" value="tRNA-synt_His"/>
    <property type="match status" value="1"/>
</dbReference>
<dbReference type="PIRSF" id="PIRSF001549">
    <property type="entry name" value="His-tRNA_synth"/>
    <property type="match status" value="1"/>
</dbReference>
<dbReference type="SUPFAM" id="SSF52954">
    <property type="entry name" value="Class II aaRS ABD-related"/>
    <property type="match status" value="1"/>
</dbReference>
<dbReference type="SUPFAM" id="SSF55681">
    <property type="entry name" value="Class II aaRS and biotin synthetases"/>
    <property type="match status" value="1"/>
</dbReference>
<dbReference type="PROSITE" id="PS50862">
    <property type="entry name" value="AA_TRNA_LIGASE_II"/>
    <property type="match status" value="1"/>
</dbReference>
<accession>B7N6A2</accession>
<evidence type="ECO:0000255" key="1">
    <source>
        <dbReference type="HAMAP-Rule" id="MF_00127"/>
    </source>
</evidence>
<sequence length="424" mass="47057">MAKNIQAIRGMNDYLPGETAIWQRIEGTLKNVLGSYGYSEIRLPIVEQTPLFKRAIGEVTDVVEKEMYTFEDRNGDSLTLRPEGTAGCVRAGIEHGLLYNQEQRLWYIGPMFRHERPQKGRYRQFHQLGCEVFGLQGPDIDAELIMLTARWWRALGISEHVTLELNSIGSLEARANYRDALVAFLEQHKEKLDEDCKRRMYTNPLRVLDSKNPEVQALLNDAPVLGDYLDEESREHFAGLCKLLESAGIAYTVNQRLVRGLDYYNRTVFEWVTNSLGSQGTVCAGGRYDGLVEQLGGRATPAVGFAMGLERLVLLVQAVNPEFKADPVVDIYLVASGADTQSAAMALAERLRDELPGVKLMTNHGGGNFKKQFARADKWGARVAVVLGESEVANGTAVVKDLRSGEQTAVAQDSVAAHLRTLLG</sequence>
<comment type="catalytic activity">
    <reaction evidence="1">
        <text>tRNA(His) + L-histidine + ATP = L-histidyl-tRNA(His) + AMP + diphosphate + H(+)</text>
        <dbReference type="Rhea" id="RHEA:17313"/>
        <dbReference type="Rhea" id="RHEA-COMP:9665"/>
        <dbReference type="Rhea" id="RHEA-COMP:9689"/>
        <dbReference type="ChEBI" id="CHEBI:15378"/>
        <dbReference type="ChEBI" id="CHEBI:30616"/>
        <dbReference type="ChEBI" id="CHEBI:33019"/>
        <dbReference type="ChEBI" id="CHEBI:57595"/>
        <dbReference type="ChEBI" id="CHEBI:78442"/>
        <dbReference type="ChEBI" id="CHEBI:78527"/>
        <dbReference type="ChEBI" id="CHEBI:456215"/>
        <dbReference type="EC" id="6.1.1.21"/>
    </reaction>
</comment>
<comment type="subunit">
    <text evidence="1">Homodimer.</text>
</comment>
<comment type="subcellular location">
    <subcellularLocation>
        <location evidence="1">Cytoplasm</location>
    </subcellularLocation>
</comment>
<comment type="similarity">
    <text evidence="1">Belongs to the class-II aminoacyl-tRNA synthetase family.</text>
</comment>
<feature type="chain" id="PRO_1000199132" description="Histidine--tRNA ligase">
    <location>
        <begin position="1"/>
        <end position="424"/>
    </location>
</feature>
<proteinExistence type="inferred from homology"/>
<gene>
    <name evidence="1" type="primary">hisS</name>
    <name type="ordered locus">ECUMN_2834</name>
</gene>
<protein>
    <recommendedName>
        <fullName evidence="1">Histidine--tRNA ligase</fullName>
        <ecNumber evidence="1">6.1.1.21</ecNumber>
    </recommendedName>
    <alternativeName>
        <fullName evidence="1">Histidyl-tRNA synthetase</fullName>
        <shortName evidence="1">HisRS</shortName>
    </alternativeName>
</protein>